<sequence length="447" mass="47456">MSGSEPPSGDSGGAGGYAVFYPAGYQALNPEEHGLDRGFRLTAFSDMKGUGCKVPQETLLKLLQGLEPDRPPGEDGGLGTGVGDETADFGLVSAAQGPRLGIGMDSCVIPLRHGGLSLVQTTDFFYPLVEDPYMMGRIACANVLSDLYAMGITECDNMLMLLSVSQKMNEKERDLVLPLMMKGFRDAAEEGGTSVTGGQTVINPWIIIGGVASVVCQPNDFILPDGAVPGDVLVLTKPLGTQVAVNAHQWLDIPEKWNKIKLVISREEVEQAYQEAMLNMATLNRTAAALMHKFNAHAATDITGFGIIGHARNLAKQQKNDVAFVIHNLPIISKMAAISKAGGNLFGLLQGTSSETSGGLLICLPREQAARFCAEMKSSRMGLLGAGQDGGVGDGQQAWIIGIVEKGNRCARIIDKPRIIEVPYRGSVVSVQEGSNNNASPPEVQLA</sequence>
<evidence type="ECO:0000250" key="1">
    <source>
        <dbReference type="UniProtKB" id="P16456"/>
    </source>
</evidence>
<evidence type="ECO:0000250" key="2">
    <source>
        <dbReference type="UniProtKB" id="P49903"/>
    </source>
</evidence>
<evidence type="ECO:0000255" key="3"/>
<evidence type="ECO:0000269" key="4">
    <source>
    </source>
</evidence>
<evidence type="ECO:0000305" key="5"/>
<evidence type="ECO:0000312" key="6">
    <source>
        <dbReference type="EMBL" id="AAH81590.1"/>
    </source>
</evidence>
<evidence type="ECO:0000312" key="7">
    <source>
        <dbReference type="EMBL" id="AAO65274.1"/>
    </source>
</evidence>
<evidence type="ECO:0000312" key="8">
    <source>
        <dbReference type="Proteomes" id="UP000000437"/>
    </source>
</evidence>
<evidence type="ECO:0000312" key="9">
    <source>
        <dbReference type="ZFIN" id="ZDB-GENE-030327-5"/>
    </source>
</evidence>
<feature type="chain" id="PRO_0000449527" description="Selenide, water dikinase 3">
    <location>
        <begin position="1"/>
        <end position="447"/>
    </location>
</feature>
<feature type="active site" evidence="3">
    <location>
        <position position="50"/>
    </location>
</feature>
<feature type="binding site" description="in other chain" evidence="2">
    <location>
        <position position="53"/>
    </location>
    <ligand>
        <name>ATP</name>
        <dbReference type="ChEBI" id="CHEBI:30616"/>
        <note>ligand shared between dimeric partners</note>
    </ligand>
</feature>
<feature type="binding site" description="in other chain" evidence="2">
    <location>
        <begin position="103"/>
        <end position="105"/>
    </location>
    <ligand>
        <name>ATP</name>
        <dbReference type="ChEBI" id="CHEBI:30616"/>
        <note>ligand shared between dimeric partners</note>
    </ligand>
</feature>
<feature type="binding site" evidence="2">
    <location>
        <position position="105"/>
    </location>
    <ligand>
        <name>Mg(2+)</name>
        <dbReference type="ChEBI" id="CHEBI:18420"/>
    </ligand>
</feature>
<feature type="binding site" description="in other chain" evidence="2">
    <location>
        <position position="123"/>
    </location>
    <ligand>
        <name>ATP</name>
        <dbReference type="ChEBI" id="CHEBI:30616"/>
        <note>ligand shared between dimeric partners</note>
    </ligand>
</feature>
<feature type="binding site" description="in other chain" evidence="2">
    <location>
        <position position="146"/>
    </location>
    <ligand>
        <name>ATP</name>
        <dbReference type="ChEBI" id="CHEBI:30616"/>
        <note>ligand shared between dimeric partners</note>
    </ligand>
</feature>
<feature type="binding site" evidence="2">
    <location>
        <position position="146"/>
    </location>
    <ligand>
        <name>Mg(2+)</name>
        <dbReference type="ChEBI" id="CHEBI:18420"/>
    </ligand>
</feature>
<feature type="binding site" evidence="2">
    <location>
        <begin position="197"/>
        <end position="200"/>
    </location>
    <ligand>
        <name>ATP</name>
        <dbReference type="ChEBI" id="CHEBI:30616"/>
        <note>ligand shared between dimeric partners</note>
    </ligand>
</feature>
<feature type="binding site" evidence="2">
    <location>
        <position position="301"/>
    </location>
    <ligand>
        <name>Mg(2+)</name>
        <dbReference type="ChEBI" id="CHEBI:18420"/>
    </ligand>
</feature>
<feature type="site" description="Important for catalytic activity" evidence="1">
    <location>
        <position position="53"/>
    </location>
</feature>
<feature type="non-standard amino acid" description="Selenocysteine" evidence="7">
    <location>
        <position position="50"/>
    </location>
</feature>
<accession>Q66I14</accession>
<accession>Q802F1</accession>
<name>SPS3_DANRE</name>
<proteinExistence type="evidence at transcript level"/>
<comment type="function">
    <text evidence="2">Synthesizes selenophosphate from selenide and ATP.</text>
</comment>
<comment type="catalytic activity">
    <reaction evidence="2">
        <text>hydrogenselenide + ATP + H2O = selenophosphate + AMP + phosphate + 2 H(+)</text>
        <dbReference type="Rhea" id="RHEA:18737"/>
        <dbReference type="ChEBI" id="CHEBI:15377"/>
        <dbReference type="ChEBI" id="CHEBI:15378"/>
        <dbReference type="ChEBI" id="CHEBI:16144"/>
        <dbReference type="ChEBI" id="CHEBI:29317"/>
        <dbReference type="ChEBI" id="CHEBI:30616"/>
        <dbReference type="ChEBI" id="CHEBI:43474"/>
        <dbReference type="ChEBI" id="CHEBI:456215"/>
        <dbReference type="EC" id="2.7.9.3"/>
    </reaction>
</comment>
<comment type="cofactor">
    <cofactor evidence="2">
        <name>Mg(2+)</name>
        <dbReference type="ChEBI" id="CHEBI:18420"/>
    </cofactor>
    <text evidence="2">Binds 1 Mg(2+) ion per monomer.</text>
</comment>
<comment type="subunit">
    <text evidence="2">Homodimer.</text>
</comment>
<comment type="tissue specificity">
    <text evidence="4">In the embryo, expressed in retina, olfactory vesicles, tectum, pronephros ducts and myotomes at 24 hours post-fertilization and in retina, tectum, liver and intestinal bulb 3 days after fertilization.</text>
</comment>
<comment type="similarity">
    <text evidence="5">Belongs to the selenophosphate synthase 1 family.</text>
</comment>
<comment type="sequence caution" evidence="5">
    <conflict type="erroneous termination">
        <sequence resource="EMBL-CDS" id="AAH81590"/>
    </conflict>
    <text>Truncated C-terminus.</text>
</comment>
<protein>
    <recommendedName>
        <fullName evidence="5">Selenide, water dikinase 3</fullName>
        <ecNumber evidence="2">2.7.9.3</ecNumber>
    </recommendedName>
    <alternativeName>
        <fullName evidence="5">Selenophosphate synthetase 3</fullName>
    </alternativeName>
</protein>
<reference evidence="8" key="1">
    <citation type="journal article" date="2013" name="Nature">
        <title>The zebrafish reference genome sequence and its relationship to the human genome.</title>
        <authorList>
            <person name="Howe K."/>
            <person name="Clark M.D."/>
            <person name="Torroja C.F."/>
            <person name="Torrance J."/>
            <person name="Berthelot C."/>
            <person name="Muffato M."/>
            <person name="Collins J.E."/>
            <person name="Humphray S."/>
            <person name="McLaren K."/>
            <person name="Matthews L."/>
            <person name="McLaren S."/>
            <person name="Sealy I."/>
            <person name="Caccamo M."/>
            <person name="Churcher C."/>
            <person name="Scott C."/>
            <person name="Barrett J.C."/>
            <person name="Koch R."/>
            <person name="Rauch G.J."/>
            <person name="White S."/>
            <person name="Chow W."/>
            <person name="Kilian B."/>
            <person name="Quintais L.T."/>
            <person name="Guerra-Assuncao J.A."/>
            <person name="Zhou Y."/>
            <person name="Gu Y."/>
            <person name="Yen J."/>
            <person name="Vogel J.H."/>
            <person name="Eyre T."/>
            <person name="Redmond S."/>
            <person name="Banerjee R."/>
            <person name="Chi J."/>
            <person name="Fu B."/>
            <person name="Langley E."/>
            <person name="Maguire S.F."/>
            <person name="Laird G.K."/>
            <person name="Lloyd D."/>
            <person name="Kenyon E."/>
            <person name="Donaldson S."/>
            <person name="Sehra H."/>
            <person name="Almeida-King J."/>
            <person name="Loveland J."/>
            <person name="Trevanion S."/>
            <person name="Jones M."/>
            <person name="Quail M."/>
            <person name="Willey D."/>
            <person name="Hunt A."/>
            <person name="Burton J."/>
            <person name="Sims S."/>
            <person name="McLay K."/>
            <person name="Plumb B."/>
            <person name="Davis J."/>
            <person name="Clee C."/>
            <person name="Oliver K."/>
            <person name="Clark R."/>
            <person name="Riddle C."/>
            <person name="Elliot D."/>
            <person name="Threadgold G."/>
            <person name="Harden G."/>
            <person name="Ware D."/>
            <person name="Begum S."/>
            <person name="Mortimore B."/>
            <person name="Kerry G."/>
            <person name="Heath P."/>
            <person name="Phillimore B."/>
            <person name="Tracey A."/>
            <person name="Corby N."/>
            <person name="Dunn M."/>
            <person name="Johnson C."/>
            <person name="Wood J."/>
            <person name="Clark S."/>
            <person name="Pelan S."/>
            <person name="Griffiths G."/>
            <person name="Smith M."/>
            <person name="Glithero R."/>
            <person name="Howden P."/>
            <person name="Barker N."/>
            <person name="Lloyd C."/>
            <person name="Stevens C."/>
            <person name="Harley J."/>
            <person name="Holt K."/>
            <person name="Panagiotidis G."/>
            <person name="Lovell J."/>
            <person name="Beasley H."/>
            <person name="Henderson C."/>
            <person name="Gordon D."/>
            <person name="Auger K."/>
            <person name="Wright D."/>
            <person name="Collins J."/>
            <person name="Raisen C."/>
            <person name="Dyer L."/>
            <person name="Leung K."/>
            <person name="Robertson L."/>
            <person name="Ambridge K."/>
            <person name="Leongamornlert D."/>
            <person name="McGuire S."/>
            <person name="Gilderthorp R."/>
            <person name="Griffiths C."/>
            <person name="Manthravadi D."/>
            <person name="Nichol S."/>
            <person name="Barker G."/>
            <person name="Whitehead S."/>
            <person name="Kay M."/>
            <person name="Brown J."/>
            <person name="Murnane C."/>
            <person name="Gray E."/>
            <person name="Humphries M."/>
            <person name="Sycamore N."/>
            <person name="Barker D."/>
            <person name="Saunders D."/>
            <person name="Wallis J."/>
            <person name="Babbage A."/>
            <person name="Hammond S."/>
            <person name="Mashreghi-Mohammadi M."/>
            <person name="Barr L."/>
            <person name="Martin S."/>
            <person name="Wray P."/>
            <person name="Ellington A."/>
            <person name="Matthews N."/>
            <person name="Ellwood M."/>
            <person name="Woodmansey R."/>
            <person name="Clark G."/>
            <person name="Cooper J."/>
            <person name="Tromans A."/>
            <person name="Grafham D."/>
            <person name="Skuce C."/>
            <person name="Pandian R."/>
            <person name="Andrews R."/>
            <person name="Harrison E."/>
            <person name="Kimberley A."/>
            <person name="Garnett J."/>
            <person name="Fosker N."/>
            <person name="Hall R."/>
            <person name="Garner P."/>
            <person name="Kelly D."/>
            <person name="Bird C."/>
            <person name="Palmer S."/>
            <person name="Gehring I."/>
            <person name="Berger A."/>
            <person name="Dooley C.M."/>
            <person name="Ersan-Urun Z."/>
            <person name="Eser C."/>
            <person name="Geiger H."/>
            <person name="Geisler M."/>
            <person name="Karotki L."/>
            <person name="Kirn A."/>
            <person name="Konantz J."/>
            <person name="Konantz M."/>
            <person name="Oberlander M."/>
            <person name="Rudolph-Geiger S."/>
            <person name="Teucke M."/>
            <person name="Lanz C."/>
            <person name="Raddatz G."/>
            <person name="Osoegawa K."/>
            <person name="Zhu B."/>
            <person name="Rapp A."/>
            <person name="Widaa S."/>
            <person name="Langford C."/>
            <person name="Yang F."/>
            <person name="Schuster S.C."/>
            <person name="Carter N.P."/>
            <person name="Harrow J."/>
            <person name="Ning Z."/>
            <person name="Herrero J."/>
            <person name="Searle S.M."/>
            <person name="Enright A."/>
            <person name="Geisler R."/>
            <person name="Plasterk R.H."/>
            <person name="Lee C."/>
            <person name="Westerfield M."/>
            <person name="de Jong P.J."/>
            <person name="Zon L.I."/>
            <person name="Postlethwait J.H."/>
            <person name="Nusslein-Volhard C."/>
            <person name="Hubbard T.J."/>
            <person name="Roest Crollius H."/>
            <person name="Rogers J."/>
            <person name="Stemple D.L."/>
        </authorList>
    </citation>
    <scope>NUCLEOTIDE SEQUENCE [LARGE SCALE GENOMIC DNA]</scope>
    <source>
        <strain evidence="8">Tuebingen</strain>
    </source>
</reference>
<reference evidence="6" key="2">
    <citation type="submission" date="2004-09" db="EMBL/GenBank/DDBJ databases">
        <authorList>
            <consortium name="NIH - Zebrafish Gene Collection (ZGC) project"/>
        </authorList>
    </citation>
    <scope>NUCLEOTIDE SEQUENCE [LARGE SCALE MRNA]</scope>
</reference>
<reference evidence="7" key="3">
    <citation type="journal article" date="2003" name="Gene Expr. Patterns">
        <title>Spatial and temporal expression patterns of selenoprotein genes during embryogenesis in zebrafish.</title>
        <authorList>
            <person name="Thisse C."/>
            <person name="Degrave A."/>
            <person name="Kryukov G.V."/>
            <person name="Gladyshev V.N."/>
            <person name="Obrecht-Pflumio S."/>
            <person name="Krol A."/>
            <person name="Thisse B."/>
            <person name="Lescure A."/>
        </authorList>
    </citation>
    <scope>NUCLEOTIDE SEQUENCE [MRNA] OF 1-371</scope>
    <scope>TISSUE SPECIFICITY</scope>
    <source>
        <tissue evidence="7">Embryo</tissue>
    </source>
</reference>
<gene>
    <name evidence="9" type="primary">sephs3</name>
    <name evidence="9" type="synonym">sephs2</name>
    <name evidence="9" type="synonym">sps2</name>
    <name evidence="6" type="ORF">zgc:92096</name>
</gene>
<organism evidence="6">
    <name type="scientific">Danio rerio</name>
    <name type="common">Zebrafish</name>
    <name type="synonym">Brachydanio rerio</name>
    <dbReference type="NCBI Taxonomy" id="7955"/>
    <lineage>
        <taxon>Eukaryota</taxon>
        <taxon>Metazoa</taxon>
        <taxon>Chordata</taxon>
        <taxon>Craniata</taxon>
        <taxon>Vertebrata</taxon>
        <taxon>Euteleostomi</taxon>
        <taxon>Actinopterygii</taxon>
        <taxon>Neopterygii</taxon>
        <taxon>Teleostei</taxon>
        <taxon>Ostariophysi</taxon>
        <taxon>Cypriniformes</taxon>
        <taxon>Danionidae</taxon>
        <taxon>Danioninae</taxon>
        <taxon>Danio</taxon>
    </lineage>
</organism>
<dbReference type="EC" id="2.7.9.3" evidence="2"/>
<dbReference type="EMBL" id="CR354375">
    <property type="status" value="NOT_ANNOTATED_CDS"/>
    <property type="molecule type" value="Genomic_DNA"/>
</dbReference>
<dbReference type="EMBL" id="BC081590">
    <property type="protein sequence ID" value="AAH81590.1"/>
    <property type="status" value="ALT_SEQ"/>
    <property type="molecule type" value="mRNA"/>
</dbReference>
<dbReference type="EMBL" id="AY221265">
    <property type="protein sequence ID" value="AAO65274.1"/>
    <property type="molecule type" value="mRNA"/>
</dbReference>
<dbReference type="RefSeq" id="NP_001004295.2">
    <property type="nucleotide sequence ID" value="NM_001004295.2"/>
</dbReference>
<dbReference type="FunCoup" id="Q66I14">
    <property type="interactions" value="58"/>
</dbReference>
<dbReference type="STRING" id="7955.ENSDARP00000026731"/>
<dbReference type="PaxDb" id="7955-ENSDARP00000026731"/>
<dbReference type="DNASU" id="352933"/>
<dbReference type="GeneID" id="352933"/>
<dbReference type="KEGG" id="dre:352933"/>
<dbReference type="AGR" id="ZFIN:ZDB-GENE-030327-5"/>
<dbReference type="CTD" id="352933"/>
<dbReference type="ZFIN" id="ZDB-GENE-030327-5">
    <property type="gene designation" value="sephs3"/>
</dbReference>
<dbReference type="eggNOG" id="KOG3939">
    <property type="taxonomic scope" value="Eukaryota"/>
</dbReference>
<dbReference type="HOGENOM" id="CLU_032859_1_0_1"/>
<dbReference type="InParanoid" id="Q66I14"/>
<dbReference type="OrthoDB" id="409395at2759"/>
<dbReference type="PhylomeDB" id="Q66I14"/>
<dbReference type="TreeFam" id="TF313811"/>
<dbReference type="Reactome" id="R-DRE-2408557">
    <property type="pathway name" value="Selenocysteine synthesis"/>
</dbReference>
<dbReference type="PRO" id="PR:Q66I14"/>
<dbReference type="Proteomes" id="UP000000437">
    <property type="component" value="Chromosome 23"/>
</dbReference>
<dbReference type="ExpressionAtlas" id="Q66I14">
    <property type="expression patterns" value="baseline and differential"/>
</dbReference>
<dbReference type="GO" id="GO:0005737">
    <property type="term" value="C:cytoplasm"/>
    <property type="evidence" value="ECO:0000318"/>
    <property type="project" value="GO_Central"/>
</dbReference>
<dbReference type="GO" id="GO:0005524">
    <property type="term" value="F:ATP binding"/>
    <property type="evidence" value="ECO:0007669"/>
    <property type="project" value="UniProtKB-KW"/>
</dbReference>
<dbReference type="GO" id="GO:0046872">
    <property type="term" value="F:metal ion binding"/>
    <property type="evidence" value="ECO:0007669"/>
    <property type="project" value="UniProtKB-KW"/>
</dbReference>
<dbReference type="GO" id="GO:0004756">
    <property type="term" value="F:selenide, water dikinase activity"/>
    <property type="evidence" value="ECO:0000318"/>
    <property type="project" value="GO_Central"/>
</dbReference>
<dbReference type="GO" id="GO:0016260">
    <property type="term" value="P:selenocysteine biosynthetic process"/>
    <property type="evidence" value="ECO:0000318"/>
    <property type="project" value="GO_Central"/>
</dbReference>
<dbReference type="CDD" id="cd02195">
    <property type="entry name" value="SelD"/>
    <property type="match status" value="1"/>
</dbReference>
<dbReference type="FunFam" id="3.30.1330.10:FF:000006">
    <property type="entry name" value="Selenide water dikinase 1"/>
    <property type="match status" value="1"/>
</dbReference>
<dbReference type="FunFam" id="3.90.650.10:FF:000010">
    <property type="entry name" value="Selenide, water dikinase"/>
    <property type="match status" value="1"/>
</dbReference>
<dbReference type="Gene3D" id="3.90.650.10">
    <property type="entry name" value="PurM-like C-terminal domain"/>
    <property type="match status" value="1"/>
</dbReference>
<dbReference type="Gene3D" id="3.30.1330.10">
    <property type="entry name" value="PurM-like, N-terminal domain"/>
    <property type="match status" value="1"/>
</dbReference>
<dbReference type="InterPro" id="IPR010918">
    <property type="entry name" value="PurM-like_C_dom"/>
</dbReference>
<dbReference type="InterPro" id="IPR036676">
    <property type="entry name" value="PurM-like_C_sf"/>
</dbReference>
<dbReference type="InterPro" id="IPR016188">
    <property type="entry name" value="PurM-like_N"/>
</dbReference>
<dbReference type="InterPro" id="IPR036921">
    <property type="entry name" value="PurM-like_N_sf"/>
</dbReference>
<dbReference type="InterPro" id="IPR004536">
    <property type="entry name" value="SPS/SelD"/>
</dbReference>
<dbReference type="NCBIfam" id="TIGR00476">
    <property type="entry name" value="selD"/>
    <property type="match status" value="1"/>
</dbReference>
<dbReference type="PANTHER" id="PTHR10256">
    <property type="entry name" value="SELENIDE, WATER DIKINASE"/>
    <property type="match status" value="1"/>
</dbReference>
<dbReference type="PANTHER" id="PTHR10256:SF1">
    <property type="entry name" value="SELENIDE, WATER DIKINASE 2"/>
    <property type="match status" value="1"/>
</dbReference>
<dbReference type="Pfam" id="PF00586">
    <property type="entry name" value="AIRS"/>
    <property type="match status" value="1"/>
</dbReference>
<dbReference type="Pfam" id="PF02769">
    <property type="entry name" value="AIRS_C"/>
    <property type="match status" value="1"/>
</dbReference>
<dbReference type="SUPFAM" id="SSF56042">
    <property type="entry name" value="PurM C-terminal domain-like"/>
    <property type="match status" value="1"/>
</dbReference>
<dbReference type="SUPFAM" id="SSF55326">
    <property type="entry name" value="PurM N-terminal domain-like"/>
    <property type="match status" value="1"/>
</dbReference>
<keyword id="KW-0067">ATP-binding</keyword>
<keyword id="KW-0418">Kinase</keyword>
<keyword id="KW-0460">Magnesium</keyword>
<keyword id="KW-0479">Metal-binding</keyword>
<keyword id="KW-0547">Nucleotide-binding</keyword>
<keyword id="KW-1185">Reference proteome</keyword>
<keyword id="KW-0711">Selenium</keyword>
<keyword id="KW-0712">Selenocysteine</keyword>
<keyword id="KW-0808">Transferase</keyword>